<name>RPOB_ANTAG</name>
<comment type="function">
    <text evidence="1">DNA-dependent RNA polymerase catalyzes the transcription of DNA into RNA using the four ribonucleoside triphosphates as substrates.</text>
</comment>
<comment type="catalytic activity">
    <reaction evidence="1">
        <text>RNA(n) + a ribonucleoside 5'-triphosphate = RNA(n+1) + diphosphate</text>
        <dbReference type="Rhea" id="RHEA:21248"/>
        <dbReference type="Rhea" id="RHEA-COMP:14527"/>
        <dbReference type="Rhea" id="RHEA-COMP:17342"/>
        <dbReference type="ChEBI" id="CHEBI:33019"/>
        <dbReference type="ChEBI" id="CHEBI:61557"/>
        <dbReference type="ChEBI" id="CHEBI:140395"/>
        <dbReference type="EC" id="2.7.7.6"/>
    </reaction>
</comment>
<comment type="subunit">
    <text evidence="1">In plastids the minimal PEP RNA polymerase catalytic core is composed of four subunits: alpha, beta, beta', and beta''. When a (nuclear-encoded) sigma factor is associated with the core the holoenzyme is formed, which can initiate transcription.</text>
</comment>
<comment type="subcellular location">
    <subcellularLocation>
        <location>Plastid</location>
        <location>Chloroplast</location>
    </subcellularLocation>
</comment>
<comment type="RNA editing">
    <location>
        <position position="46" evidence="2 3"/>
    </location>
    <location>
        <position position="80" evidence="2 3"/>
    </location>
    <location>
        <position position="150" evidence="2 3"/>
    </location>
    <location>
        <position position="152" evidence="2 3"/>
    </location>
    <location>
        <position position="259" evidence="2 3"/>
    </location>
    <location>
        <position position="294" evidence="2 3"/>
    </location>
    <location>
        <position position="326" evidence="2 3"/>
    </location>
    <location>
        <position position="392" evidence="2 3"/>
    </location>
    <location>
        <position position="397" evidence="2 3"/>
    </location>
    <location>
        <position position="414" evidence="2 3"/>
    </location>
    <location>
        <position position="418" evidence="2 3"/>
    </location>
    <location>
        <position position="421" evidence="2 3"/>
    </location>
    <location>
        <position position="423" evidence="2 3"/>
    </location>
    <location>
        <position position="522" evidence="2 3"/>
    </location>
    <location>
        <position position="531" evidence="2 3"/>
    </location>
    <location>
        <position position="534" evidence="2 3"/>
    </location>
    <location>
        <position position="542" evidence="2 3"/>
    </location>
    <location>
        <position position="551" evidence="2 3"/>
    </location>
    <location>
        <position position="574" evidence="2 3"/>
    </location>
    <location>
        <position position="650" evidence="2 3"/>
    </location>
    <location>
        <position position="652" evidence="2 3"/>
    </location>
    <location>
        <position position="668" evidence="2 3"/>
    </location>
    <location>
        <position position="719" evidence="2 3"/>
    </location>
    <location>
        <position position="721" evidence="2 3"/>
    </location>
    <location>
        <position position="731" evidence="2 3"/>
    </location>
    <location>
        <position position="738" evidence="2 3"/>
    </location>
    <location>
        <position position="739" evidence="2 3"/>
    </location>
    <location>
        <position position="759" evidence="2 3"/>
    </location>
    <location>
        <position position="832" evidence="2 3"/>
    </location>
    <location>
        <position position="842" evidence="2 3"/>
    </location>
    <location>
        <position position="860" evidence="2 3"/>
    </location>
    <location>
        <position position="879" evidence="2 3"/>
    </location>
    <location>
        <position position="897" evidence="2 3"/>
    </location>
    <location>
        <position position="902" evidence="2 3"/>
    </location>
    <location>
        <position position="962" evidence="2 3"/>
    </location>
    <location>
        <position position="969" evidence="2 3"/>
    </location>
    <location>
        <position position="973" evidence="2 3"/>
    </location>
    <location>
        <position position="984" evidence="2 3"/>
    </location>
    <location>
        <position position="1007" evidence="2 3"/>
    </location>
    <location>
        <position position="1023" evidence="2 3"/>
    </location>
    <location>
        <position position="1048" evidence="2 3"/>
    </location>
    <location>
        <position position="1052" evidence="2 3"/>
    </location>
    <text>The nonsense codons at positions 46, 421, 973, 984 and 1048 are modified to sense codons.</text>
</comment>
<comment type="similarity">
    <text evidence="1">Belongs to the RNA polymerase beta chain family.</text>
</comment>
<accession>Q85BW1</accession>
<accession>Q85UU6</accession>
<dbReference type="EC" id="2.7.7.6" evidence="1"/>
<dbReference type="EMBL" id="AB086179">
    <property type="protein sequence ID" value="BAC55326.1"/>
    <property type="molecule type" value="Genomic_DNA"/>
</dbReference>
<dbReference type="EMBL" id="AB087418">
    <property type="protein sequence ID" value="BAC55416.1"/>
    <property type="molecule type" value="mRNA"/>
</dbReference>
<dbReference type="EMBL" id="AB087419">
    <property type="protein sequence ID" value="BAC55417.1"/>
    <property type="molecule type" value="mRNA"/>
</dbReference>
<dbReference type="RefSeq" id="NP_777390.1">
    <property type="nucleotide sequence ID" value="NC_004543.1"/>
</dbReference>
<dbReference type="SMR" id="Q85BW1"/>
<dbReference type="GeneID" id="2553423"/>
<dbReference type="GO" id="GO:0009507">
    <property type="term" value="C:chloroplast"/>
    <property type="evidence" value="ECO:0007669"/>
    <property type="project" value="UniProtKB-SubCell"/>
</dbReference>
<dbReference type="GO" id="GO:0000428">
    <property type="term" value="C:DNA-directed RNA polymerase complex"/>
    <property type="evidence" value="ECO:0007669"/>
    <property type="project" value="UniProtKB-KW"/>
</dbReference>
<dbReference type="GO" id="GO:0005739">
    <property type="term" value="C:mitochondrion"/>
    <property type="evidence" value="ECO:0007669"/>
    <property type="project" value="GOC"/>
</dbReference>
<dbReference type="GO" id="GO:0003677">
    <property type="term" value="F:DNA binding"/>
    <property type="evidence" value="ECO:0007669"/>
    <property type="project" value="UniProtKB-UniRule"/>
</dbReference>
<dbReference type="GO" id="GO:0003899">
    <property type="term" value="F:DNA-directed RNA polymerase activity"/>
    <property type="evidence" value="ECO:0007669"/>
    <property type="project" value="UniProtKB-UniRule"/>
</dbReference>
<dbReference type="GO" id="GO:0032549">
    <property type="term" value="F:ribonucleoside binding"/>
    <property type="evidence" value="ECO:0007669"/>
    <property type="project" value="InterPro"/>
</dbReference>
<dbReference type="GO" id="GO:0006351">
    <property type="term" value="P:DNA-templated transcription"/>
    <property type="evidence" value="ECO:0007669"/>
    <property type="project" value="UniProtKB-UniRule"/>
</dbReference>
<dbReference type="CDD" id="cd00653">
    <property type="entry name" value="RNA_pol_B_RPB2"/>
    <property type="match status" value="1"/>
</dbReference>
<dbReference type="Gene3D" id="2.40.50.100">
    <property type="match status" value="1"/>
</dbReference>
<dbReference type="Gene3D" id="2.40.50.150">
    <property type="match status" value="1"/>
</dbReference>
<dbReference type="Gene3D" id="3.90.1100.10">
    <property type="match status" value="1"/>
</dbReference>
<dbReference type="Gene3D" id="2.30.150.10">
    <property type="entry name" value="DNA-directed RNA polymerase, beta subunit, external 1 domain"/>
    <property type="match status" value="1"/>
</dbReference>
<dbReference type="Gene3D" id="2.40.270.10">
    <property type="entry name" value="DNA-directed RNA polymerase, subunit 2, domain 6"/>
    <property type="match status" value="1"/>
</dbReference>
<dbReference type="Gene3D" id="3.90.1800.10">
    <property type="entry name" value="RNA polymerase alpha subunit dimerisation domain"/>
    <property type="match status" value="1"/>
</dbReference>
<dbReference type="Gene3D" id="3.90.1110.10">
    <property type="entry name" value="RNA polymerase Rpb2, domain 2"/>
    <property type="match status" value="1"/>
</dbReference>
<dbReference type="HAMAP" id="MF_01321">
    <property type="entry name" value="RNApol_bact_RpoB"/>
    <property type="match status" value="1"/>
</dbReference>
<dbReference type="InterPro" id="IPR042107">
    <property type="entry name" value="DNA-dir_RNA_pol_bsu_ext_1_sf"/>
</dbReference>
<dbReference type="InterPro" id="IPR015712">
    <property type="entry name" value="DNA-dir_RNA_pol_su2"/>
</dbReference>
<dbReference type="InterPro" id="IPR007120">
    <property type="entry name" value="DNA-dir_RNAP_su2_dom"/>
</dbReference>
<dbReference type="InterPro" id="IPR037033">
    <property type="entry name" value="DNA-dir_RNAP_su2_hyb_sf"/>
</dbReference>
<dbReference type="InterPro" id="IPR010243">
    <property type="entry name" value="RNA_pol_bsu_bac"/>
</dbReference>
<dbReference type="InterPro" id="IPR007121">
    <property type="entry name" value="RNA_pol_bsu_CS"/>
</dbReference>
<dbReference type="InterPro" id="IPR007644">
    <property type="entry name" value="RNA_pol_bsu_protrusion"/>
</dbReference>
<dbReference type="InterPro" id="IPR007642">
    <property type="entry name" value="RNA_pol_Rpb2_2"/>
</dbReference>
<dbReference type="InterPro" id="IPR037034">
    <property type="entry name" value="RNA_pol_Rpb2_2_sf"/>
</dbReference>
<dbReference type="InterPro" id="IPR007645">
    <property type="entry name" value="RNA_pol_Rpb2_3"/>
</dbReference>
<dbReference type="InterPro" id="IPR007641">
    <property type="entry name" value="RNA_pol_Rpb2_7"/>
</dbReference>
<dbReference type="InterPro" id="IPR014724">
    <property type="entry name" value="RNA_pol_RPB2_OB-fold"/>
</dbReference>
<dbReference type="NCBIfam" id="NF001616">
    <property type="entry name" value="PRK00405.1"/>
    <property type="match status" value="1"/>
</dbReference>
<dbReference type="PANTHER" id="PTHR20856">
    <property type="entry name" value="DNA-DIRECTED RNA POLYMERASE I SUBUNIT 2"/>
    <property type="match status" value="1"/>
</dbReference>
<dbReference type="Pfam" id="PF04563">
    <property type="entry name" value="RNA_pol_Rpb2_1"/>
    <property type="match status" value="1"/>
</dbReference>
<dbReference type="Pfam" id="PF04561">
    <property type="entry name" value="RNA_pol_Rpb2_2"/>
    <property type="match status" value="1"/>
</dbReference>
<dbReference type="Pfam" id="PF04565">
    <property type="entry name" value="RNA_pol_Rpb2_3"/>
    <property type="match status" value="1"/>
</dbReference>
<dbReference type="Pfam" id="PF00562">
    <property type="entry name" value="RNA_pol_Rpb2_6"/>
    <property type="match status" value="1"/>
</dbReference>
<dbReference type="Pfam" id="PF04560">
    <property type="entry name" value="RNA_pol_Rpb2_7"/>
    <property type="match status" value="1"/>
</dbReference>
<dbReference type="SUPFAM" id="SSF64484">
    <property type="entry name" value="beta and beta-prime subunits of DNA dependent RNA-polymerase"/>
    <property type="match status" value="1"/>
</dbReference>
<dbReference type="PROSITE" id="PS01166">
    <property type="entry name" value="RNA_POL_BETA"/>
    <property type="match status" value="1"/>
</dbReference>
<geneLocation type="chloroplast"/>
<evidence type="ECO:0000255" key="1">
    <source>
        <dbReference type="HAMAP-Rule" id="MF_01321"/>
    </source>
</evidence>
<evidence type="ECO:0000269" key="2">
    <source>
    </source>
</evidence>
<evidence type="ECO:0000269" key="3">
    <source>
    </source>
</evidence>
<keyword id="KW-0150">Chloroplast</keyword>
<keyword id="KW-0240">DNA-directed RNA polymerase</keyword>
<keyword id="KW-0548">Nucleotidyltransferase</keyword>
<keyword id="KW-0934">Plastid</keyword>
<keyword id="KW-0691">RNA editing</keyword>
<keyword id="KW-0804">Transcription</keyword>
<keyword id="KW-0808">Transferase</keyword>
<gene>
    <name evidence="1" type="primary">rpoB</name>
</gene>
<protein>
    <recommendedName>
        <fullName evidence="1">DNA-directed RNA polymerase subunit beta</fullName>
        <ecNumber evidence="1">2.7.7.6</ecNumber>
    </recommendedName>
    <alternativeName>
        <fullName evidence="1">PEP</fullName>
    </alternativeName>
    <alternativeName>
        <fullName evidence="1">Plastid-encoded RNA polymerase subunit beta</fullName>
        <shortName evidence="1">RNA polymerase subunit beta</shortName>
    </alternativeName>
</protein>
<sequence>MILRKKIELFVLPEFTEIQFEGFHRFIKYGLVKELNDFPKIEDTDQEFEFQLFSRQYQLAEPPIEERDAIYQSITYSSDLYVPAQLTERKKGRVKKQIVFLGSIPLMNSQGTFVVNGVARVIINQILRSPGIYYNSELDRNGIPIYTGTIISDWGRRLKLEIDGKTRIWARISKKRKVSILVLLLAMGLDIEEILGNVCYPKLLLGCMKRKTKKEHLQSTEDAIVELYKQIYCIGGDLNFSESISKELQKKFFQQRCELGKIGRLNLNKKLNLDVPENENFLLPQDLLAAVDYLIKIRFGIGVPDDIDHLKNRRVRSVTDLLQDQLKLALNRLENSIRQAIRGANRREHLPTPKSLVTSTPLITTFKEFFGSHPLSQFLDQTNPLTEVVHKRRLSSLGPGGLTRRTASFQVRDIHPSHYGRICPIETSEGMNAGLVASLAIHAKVDNWGSLESPFYKISGVSEEEDMTFLSAGEDENYHIATGNCLALNQTNQEEQVTPARYRQEFVATAWNQINLRSIFPLQYFSIGTSLIPFLEHNDANRALMGFNMQRQAVPLSKPEKCIVGTGLESQTALDSGSVIVATEGGRISYTDGRRITLLTKEKEVETKLVIYQRSNNSTCIHEKPRIQLREYVKKGQILADGRATAGGELALGKNILVAYMPWEGYNFEDAILISERLIHEDIYTSIHIERYEIEARVTSQGPERITREIPHLDNYLLRHLDESGLVLPGSWVETGDVLVGKLTPQETEESLRAPEGKLLQAIFGIQVVTAKETCLKVPLGGRGRVIDIKWIYQEKTSTTYAEIVHVYILQKREIQVGDKVAGRHGNKGIISKILPRQDMPYLQDGTPVDMVLSPLGVPSRMNVGQIFECLLGLAGDFLQKHYRVTPFDERYEREASRKLVFSELHEASRQTANPWLFESDNPGKSGLLDGRTGDIFEEPVTIGKAYMLKLIHQVDDKIHARSSGPYALVTQQPLRGKSRRGGQRVGEMEVWALEGFGAAYTLEEMLTIKSDHIQARFEVLRAIVTGELIPKPETAPESFRLLVRELRSLALNLDHIIVSEKELRIKFKDI</sequence>
<reference key="1">
    <citation type="journal article" date="2003" name="Nucleic Acids Res.">
        <title>The complete nucleotide sequence of the hornwort (Anthoceros formosae) chloroplast genome: insight into the earliest land plants.</title>
        <authorList>
            <person name="Kugita M."/>
            <person name="Kaneko A."/>
            <person name="Yamamoto Y."/>
            <person name="Takeya Y."/>
            <person name="Matsumoto T."/>
            <person name="Yoshinaga K."/>
        </authorList>
    </citation>
    <scope>NUCLEOTIDE SEQUENCE [LARGE SCALE GENOMIC DNA]</scope>
    <scope>RNA EDITING</scope>
</reference>
<reference key="2">
    <citation type="journal article" date="2003" name="Nucleic Acids Res.">
        <title>RNA editing in hornwort chloroplasts makes more than half the genes functional.</title>
        <authorList>
            <person name="Kugita M."/>
            <person name="Yamamoto Y."/>
            <person name="Fujikawa T."/>
            <person name="Matsumoto T."/>
            <person name="Yoshinaga K."/>
        </authorList>
    </citation>
    <scope>NUCLEOTIDE SEQUENCE [MRNA]</scope>
    <scope>RNA EDITING</scope>
    <source>
        <tissue>Thallus</tissue>
    </source>
</reference>
<organism>
    <name type="scientific">Anthoceros angustus</name>
    <name type="common">Hornwort</name>
    <name type="synonym">Anthoceros formosae</name>
    <dbReference type="NCBI Taxonomy" id="48387"/>
    <lineage>
        <taxon>Eukaryota</taxon>
        <taxon>Viridiplantae</taxon>
        <taxon>Streptophyta</taxon>
        <taxon>Embryophyta</taxon>
        <taxon>Anthocerotophyta</taxon>
        <taxon>Anthocerotopsida</taxon>
        <taxon>Anthocerotidae</taxon>
        <taxon>Anthocerotales</taxon>
        <taxon>Anthocerotaceae</taxon>
        <taxon>Anthoceros</taxon>
    </lineage>
</organism>
<feature type="chain" id="PRO_0000048010" description="DNA-directed RNA polymerase subunit beta">
    <location>
        <begin position="1"/>
        <end position="1071"/>
    </location>
</feature>
<proteinExistence type="evidence at transcript level"/>